<proteinExistence type="inferred from homology"/>
<name>PSTB_STAAM</name>
<organism>
    <name type="scientific">Staphylococcus aureus (strain Mu50 / ATCC 700699)</name>
    <dbReference type="NCBI Taxonomy" id="158878"/>
    <lineage>
        <taxon>Bacteria</taxon>
        <taxon>Bacillati</taxon>
        <taxon>Bacillota</taxon>
        <taxon>Bacilli</taxon>
        <taxon>Bacillales</taxon>
        <taxon>Staphylococcaceae</taxon>
        <taxon>Staphylococcus</taxon>
    </lineage>
</organism>
<evidence type="ECO:0000255" key="1">
    <source>
        <dbReference type="HAMAP-Rule" id="MF_01702"/>
    </source>
</evidence>
<evidence type="ECO:0000256" key="2">
    <source>
        <dbReference type="SAM" id="MobiDB-lite"/>
    </source>
</evidence>
<accession>P69878</accession>
<accession>Q9EX64</accession>
<keyword id="KW-0067">ATP-binding</keyword>
<keyword id="KW-1003">Cell membrane</keyword>
<keyword id="KW-0472">Membrane</keyword>
<keyword id="KW-0547">Nucleotide-binding</keyword>
<keyword id="KW-0592">Phosphate transport</keyword>
<keyword id="KW-1278">Translocase</keyword>
<keyword id="KW-0813">Transport</keyword>
<reference key="1">
    <citation type="journal article" date="2001" name="Lancet">
        <title>Whole genome sequencing of meticillin-resistant Staphylococcus aureus.</title>
        <authorList>
            <person name="Kuroda M."/>
            <person name="Ohta T."/>
            <person name="Uchiyama I."/>
            <person name="Baba T."/>
            <person name="Yuzawa H."/>
            <person name="Kobayashi I."/>
            <person name="Cui L."/>
            <person name="Oguchi A."/>
            <person name="Aoki K."/>
            <person name="Nagai Y."/>
            <person name="Lian J.-Q."/>
            <person name="Ito T."/>
            <person name="Kanamori M."/>
            <person name="Matsumaru H."/>
            <person name="Maruyama A."/>
            <person name="Murakami H."/>
            <person name="Hosoyama A."/>
            <person name="Mizutani-Ui Y."/>
            <person name="Takahashi N.K."/>
            <person name="Sawano T."/>
            <person name="Inoue R."/>
            <person name="Kaito C."/>
            <person name="Sekimizu K."/>
            <person name="Hirakawa H."/>
            <person name="Kuhara S."/>
            <person name="Goto S."/>
            <person name="Yabuzaki J."/>
            <person name="Kanehisa M."/>
            <person name="Yamashita A."/>
            <person name="Oshima K."/>
            <person name="Furuya K."/>
            <person name="Yoshino C."/>
            <person name="Shiba T."/>
            <person name="Hattori M."/>
            <person name="Ogasawara N."/>
            <person name="Hayashi H."/>
            <person name="Hiramatsu K."/>
        </authorList>
    </citation>
    <scope>NUCLEOTIDE SEQUENCE [LARGE SCALE GENOMIC DNA]</scope>
    <source>
        <strain>Mu50 / ATCC 700699</strain>
    </source>
</reference>
<feature type="chain" id="PRO_0000092878" description="Phosphate import ATP-binding protein PstB">
    <location>
        <begin position="1"/>
        <end position="283"/>
    </location>
</feature>
<feature type="domain" description="ABC transporter" evidence="1">
    <location>
        <begin position="37"/>
        <end position="278"/>
    </location>
</feature>
<feature type="region of interest" description="Disordered" evidence="2">
    <location>
        <begin position="1"/>
        <end position="32"/>
    </location>
</feature>
<feature type="compositionally biased region" description="Polar residues" evidence="2">
    <location>
        <begin position="1"/>
        <end position="20"/>
    </location>
</feature>
<feature type="binding site" evidence="1">
    <location>
        <begin position="69"/>
        <end position="76"/>
    </location>
    <ligand>
        <name>ATP</name>
        <dbReference type="ChEBI" id="CHEBI:30616"/>
    </ligand>
</feature>
<comment type="function">
    <text evidence="1">Part of the ABC transporter complex PstSACB involved in phosphate import. Responsible for energy coupling to the transport system.</text>
</comment>
<comment type="catalytic activity">
    <reaction evidence="1">
        <text>phosphate(out) + ATP + H2O = ADP + 2 phosphate(in) + H(+)</text>
        <dbReference type="Rhea" id="RHEA:24440"/>
        <dbReference type="ChEBI" id="CHEBI:15377"/>
        <dbReference type="ChEBI" id="CHEBI:15378"/>
        <dbReference type="ChEBI" id="CHEBI:30616"/>
        <dbReference type="ChEBI" id="CHEBI:43474"/>
        <dbReference type="ChEBI" id="CHEBI:456216"/>
        <dbReference type="EC" id="7.3.2.1"/>
    </reaction>
</comment>
<comment type="subunit">
    <text evidence="1">The complex is composed of two ATP-binding proteins (PstB), two transmembrane proteins (PstC and PstA) and a solute-binding protein (PstS).</text>
</comment>
<comment type="subcellular location">
    <subcellularLocation>
        <location evidence="1">Cell membrane</location>
        <topology evidence="1">Peripheral membrane protein</topology>
    </subcellularLocation>
</comment>
<comment type="similarity">
    <text evidence="1">Belongs to the ABC transporter superfamily. Phosphate importer (TC 3.A.1.7) family.</text>
</comment>
<protein>
    <recommendedName>
        <fullName evidence="1">Phosphate import ATP-binding protein PstB</fullName>
        <ecNumber evidence="1">7.3.2.1</ecNumber>
    </recommendedName>
    <alternativeName>
        <fullName evidence="1">ABC phosphate transporter</fullName>
    </alternativeName>
    <alternativeName>
        <fullName evidence="1">Phosphate-transporting ATPase</fullName>
    </alternativeName>
</protein>
<dbReference type="EC" id="7.3.2.1" evidence="1"/>
<dbReference type="EMBL" id="BA000017">
    <property type="protein sequence ID" value="BAB57548.1"/>
    <property type="molecule type" value="Genomic_DNA"/>
</dbReference>
<dbReference type="RefSeq" id="WP_000079447.1">
    <property type="nucleotide sequence ID" value="NC_002758.2"/>
</dbReference>
<dbReference type="SMR" id="P69878"/>
<dbReference type="KEGG" id="sav:SAV1386"/>
<dbReference type="HOGENOM" id="CLU_000604_1_22_9"/>
<dbReference type="PhylomeDB" id="P69878"/>
<dbReference type="Proteomes" id="UP000002481">
    <property type="component" value="Chromosome"/>
</dbReference>
<dbReference type="GO" id="GO:0005886">
    <property type="term" value="C:plasma membrane"/>
    <property type="evidence" value="ECO:0007669"/>
    <property type="project" value="UniProtKB-SubCell"/>
</dbReference>
<dbReference type="GO" id="GO:0005524">
    <property type="term" value="F:ATP binding"/>
    <property type="evidence" value="ECO:0007669"/>
    <property type="project" value="UniProtKB-KW"/>
</dbReference>
<dbReference type="GO" id="GO:0016887">
    <property type="term" value="F:ATP hydrolysis activity"/>
    <property type="evidence" value="ECO:0007669"/>
    <property type="project" value="InterPro"/>
</dbReference>
<dbReference type="GO" id="GO:0015415">
    <property type="term" value="F:ATPase-coupled phosphate ion transmembrane transporter activity"/>
    <property type="evidence" value="ECO:0007669"/>
    <property type="project" value="UniProtKB-EC"/>
</dbReference>
<dbReference type="GO" id="GO:0035435">
    <property type="term" value="P:phosphate ion transmembrane transport"/>
    <property type="evidence" value="ECO:0007669"/>
    <property type="project" value="InterPro"/>
</dbReference>
<dbReference type="CDD" id="cd03260">
    <property type="entry name" value="ABC_PstB_phosphate_transporter"/>
    <property type="match status" value="1"/>
</dbReference>
<dbReference type="Gene3D" id="3.40.50.300">
    <property type="entry name" value="P-loop containing nucleotide triphosphate hydrolases"/>
    <property type="match status" value="1"/>
</dbReference>
<dbReference type="InterPro" id="IPR003593">
    <property type="entry name" value="AAA+_ATPase"/>
</dbReference>
<dbReference type="InterPro" id="IPR003439">
    <property type="entry name" value="ABC_transporter-like_ATP-bd"/>
</dbReference>
<dbReference type="InterPro" id="IPR017871">
    <property type="entry name" value="ABC_transporter-like_CS"/>
</dbReference>
<dbReference type="InterPro" id="IPR027417">
    <property type="entry name" value="P-loop_NTPase"/>
</dbReference>
<dbReference type="InterPro" id="IPR005670">
    <property type="entry name" value="PstB-like"/>
</dbReference>
<dbReference type="NCBIfam" id="TIGR00972">
    <property type="entry name" value="3a0107s01c2"/>
    <property type="match status" value="1"/>
</dbReference>
<dbReference type="PANTHER" id="PTHR43423">
    <property type="entry name" value="ABC TRANSPORTER I FAMILY MEMBER 17"/>
    <property type="match status" value="1"/>
</dbReference>
<dbReference type="PANTHER" id="PTHR43423:SF1">
    <property type="entry name" value="ABC TRANSPORTER I FAMILY MEMBER 17"/>
    <property type="match status" value="1"/>
</dbReference>
<dbReference type="Pfam" id="PF00005">
    <property type="entry name" value="ABC_tran"/>
    <property type="match status" value="1"/>
</dbReference>
<dbReference type="SMART" id="SM00382">
    <property type="entry name" value="AAA"/>
    <property type="match status" value="1"/>
</dbReference>
<dbReference type="SUPFAM" id="SSF52540">
    <property type="entry name" value="P-loop containing nucleoside triphosphate hydrolases"/>
    <property type="match status" value="1"/>
</dbReference>
<dbReference type="PROSITE" id="PS00211">
    <property type="entry name" value="ABC_TRANSPORTER_1"/>
    <property type="match status" value="1"/>
</dbReference>
<dbReference type="PROSITE" id="PS50893">
    <property type="entry name" value="ABC_TRANSPORTER_2"/>
    <property type="match status" value="1"/>
</dbReference>
<dbReference type="PROSITE" id="PS51238">
    <property type="entry name" value="PSTB"/>
    <property type="match status" value="1"/>
</dbReference>
<gene>
    <name evidence="1" type="primary">pstB</name>
    <name type="ordered locus">SAV1386</name>
</gene>
<sequence length="283" mass="32154">MAQTLAQTKQISQSHTFDVSQSHHKTPDDTNSHSVIYSTQNLDLWYGENHALQNINLDIYENQITAIIGPSGCGKSTYIKTLNRMVELVPSVKTAGKILYRDQDIFDQKYSKEQLRTNVGMVFQQPNPFPKSIYDNITYGPKIHGIKNKKVLDEIVEKSLRGAAIWDELKDRLHTNAYSLSGGQQQRVCIARCLAIEPEVILMDEPTSALDPISTLRVEELVQELKEKYTIIMVTHNMQQAARVSDKTAFFLNGYVNEYDDTDKIFSNPSNKKTEDYISGRFG</sequence>